<feature type="chain" id="PRO_0000198021" description="Bis(5'-nucleosyl)-tetraphosphatase, symmetrical">
    <location>
        <begin position="1"/>
        <end position="289"/>
    </location>
</feature>
<keyword id="KW-0378">Hydrolase</keyword>
<keyword id="KW-1185">Reference proteome</keyword>
<name>APAH_YERPE</name>
<accession>Q8ZIK7</accession>
<accession>Q0WJH5</accession>
<reference key="1">
    <citation type="journal article" date="2001" name="Nature">
        <title>Genome sequence of Yersinia pestis, the causative agent of plague.</title>
        <authorList>
            <person name="Parkhill J."/>
            <person name="Wren B.W."/>
            <person name="Thomson N.R."/>
            <person name="Titball R.W."/>
            <person name="Holden M.T.G."/>
            <person name="Prentice M.B."/>
            <person name="Sebaihia M."/>
            <person name="James K.D."/>
            <person name="Churcher C.M."/>
            <person name="Mungall K.L."/>
            <person name="Baker S."/>
            <person name="Basham D."/>
            <person name="Bentley S.D."/>
            <person name="Brooks K."/>
            <person name="Cerdeno-Tarraga A.-M."/>
            <person name="Chillingworth T."/>
            <person name="Cronin A."/>
            <person name="Davies R.M."/>
            <person name="Davis P."/>
            <person name="Dougan G."/>
            <person name="Feltwell T."/>
            <person name="Hamlin N."/>
            <person name="Holroyd S."/>
            <person name="Jagels K."/>
            <person name="Karlyshev A.V."/>
            <person name="Leather S."/>
            <person name="Moule S."/>
            <person name="Oyston P.C.F."/>
            <person name="Quail M.A."/>
            <person name="Rutherford K.M."/>
            <person name="Simmonds M."/>
            <person name="Skelton J."/>
            <person name="Stevens K."/>
            <person name="Whitehead S."/>
            <person name="Barrell B.G."/>
        </authorList>
    </citation>
    <scope>NUCLEOTIDE SEQUENCE [LARGE SCALE GENOMIC DNA]</scope>
    <source>
        <strain>CO-92 / Biovar Orientalis</strain>
    </source>
</reference>
<reference key="2">
    <citation type="journal article" date="2002" name="J. Bacteriol.">
        <title>Genome sequence of Yersinia pestis KIM.</title>
        <authorList>
            <person name="Deng W."/>
            <person name="Burland V."/>
            <person name="Plunkett G. III"/>
            <person name="Boutin A."/>
            <person name="Mayhew G.F."/>
            <person name="Liss P."/>
            <person name="Perna N.T."/>
            <person name="Rose D.J."/>
            <person name="Mau B."/>
            <person name="Zhou S."/>
            <person name="Schwartz D.C."/>
            <person name="Fetherston J.D."/>
            <person name="Lindler L.E."/>
            <person name="Brubaker R.R."/>
            <person name="Plano G.V."/>
            <person name="Straley S.C."/>
            <person name="McDonough K.A."/>
            <person name="Nilles M.L."/>
            <person name="Matson J.S."/>
            <person name="Blattner F.R."/>
            <person name="Perry R.D."/>
        </authorList>
    </citation>
    <scope>NUCLEOTIDE SEQUENCE [LARGE SCALE GENOMIC DNA]</scope>
    <source>
        <strain>KIM10+ / Biovar Mediaevalis</strain>
    </source>
</reference>
<reference key="3">
    <citation type="journal article" date="2004" name="DNA Res.">
        <title>Complete genome sequence of Yersinia pestis strain 91001, an isolate avirulent to humans.</title>
        <authorList>
            <person name="Song Y."/>
            <person name="Tong Z."/>
            <person name="Wang J."/>
            <person name="Wang L."/>
            <person name="Guo Z."/>
            <person name="Han Y."/>
            <person name="Zhang J."/>
            <person name="Pei D."/>
            <person name="Zhou D."/>
            <person name="Qin H."/>
            <person name="Pang X."/>
            <person name="Han Y."/>
            <person name="Zhai J."/>
            <person name="Li M."/>
            <person name="Cui B."/>
            <person name="Qi Z."/>
            <person name="Jin L."/>
            <person name="Dai R."/>
            <person name="Chen F."/>
            <person name="Li S."/>
            <person name="Ye C."/>
            <person name="Du Z."/>
            <person name="Lin W."/>
            <person name="Wang J."/>
            <person name="Yu J."/>
            <person name="Yang H."/>
            <person name="Wang J."/>
            <person name="Huang P."/>
            <person name="Yang R."/>
        </authorList>
    </citation>
    <scope>NUCLEOTIDE SEQUENCE [LARGE SCALE GENOMIC DNA]</scope>
    <source>
        <strain>91001 / Biovar Mediaevalis</strain>
    </source>
</reference>
<organism>
    <name type="scientific">Yersinia pestis</name>
    <dbReference type="NCBI Taxonomy" id="632"/>
    <lineage>
        <taxon>Bacteria</taxon>
        <taxon>Pseudomonadati</taxon>
        <taxon>Pseudomonadota</taxon>
        <taxon>Gammaproteobacteria</taxon>
        <taxon>Enterobacterales</taxon>
        <taxon>Yersiniaceae</taxon>
        <taxon>Yersinia</taxon>
    </lineage>
</organism>
<dbReference type="EC" id="3.6.1.41" evidence="1"/>
<dbReference type="EMBL" id="AL590842">
    <property type="protein sequence ID" value="CAL19170.1"/>
    <property type="molecule type" value="Genomic_DNA"/>
</dbReference>
<dbReference type="EMBL" id="AE009952">
    <property type="protein sequence ID" value="AAM87233.1"/>
    <property type="molecule type" value="Genomic_DNA"/>
</dbReference>
<dbReference type="EMBL" id="AE017042">
    <property type="protein sequence ID" value="AAS63837.1"/>
    <property type="molecule type" value="Genomic_DNA"/>
</dbReference>
<dbReference type="PIR" id="AH0060">
    <property type="entry name" value="AH0060"/>
</dbReference>
<dbReference type="RefSeq" id="WP_002210492.1">
    <property type="nucleotide sequence ID" value="NZ_WUCM01000024.1"/>
</dbReference>
<dbReference type="RefSeq" id="YP_002345563.1">
    <property type="nucleotide sequence ID" value="NC_003143.1"/>
</dbReference>
<dbReference type="SMR" id="Q8ZIK7"/>
<dbReference type="STRING" id="214092.YPO0490"/>
<dbReference type="PaxDb" id="214092-YPO0490"/>
<dbReference type="DNASU" id="1148632"/>
<dbReference type="EnsemblBacteria" id="AAS63837">
    <property type="protein sequence ID" value="AAS63837"/>
    <property type="gene ID" value="YP_3689"/>
</dbReference>
<dbReference type="GeneID" id="57974120"/>
<dbReference type="KEGG" id="ype:YPO0490"/>
<dbReference type="KEGG" id="ypk:y3685"/>
<dbReference type="KEGG" id="ypm:YP_3689"/>
<dbReference type="PATRIC" id="fig|214092.21.peg.740"/>
<dbReference type="eggNOG" id="COG0639">
    <property type="taxonomic scope" value="Bacteria"/>
</dbReference>
<dbReference type="HOGENOM" id="CLU_056184_2_0_6"/>
<dbReference type="OMA" id="INAFTRM"/>
<dbReference type="OrthoDB" id="9807890at2"/>
<dbReference type="Proteomes" id="UP000000815">
    <property type="component" value="Chromosome"/>
</dbReference>
<dbReference type="Proteomes" id="UP000001019">
    <property type="component" value="Chromosome"/>
</dbReference>
<dbReference type="Proteomes" id="UP000002490">
    <property type="component" value="Chromosome"/>
</dbReference>
<dbReference type="GO" id="GO:0005737">
    <property type="term" value="C:cytoplasm"/>
    <property type="evidence" value="ECO:0000318"/>
    <property type="project" value="GO_Central"/>
</dbReference>
<dbReference type="GO" id="GO:0008803">
    <property type="term" value="F:bis(5'-nucleosyl)-tetraphosphatase (symmetrical) activity"/>
    <property type="evidence" value="ECO:0000318"/>
    <property type="project" value="GO_Central"/>
</dbReference>
<dbReference type="GO" id="GO:0016791">
    <property type="term" value="F:phosphatase activity"/>
    <property type="evidence" value="ECO:0000318"/>
    <property type="project" value="GO_Central"/>
</dbReference>
<dbReference type="GO" id="GO:0110154">
    <property type="term" value="P:RNA decapping"/>
    <property type="evidence" value="ECO:0000318"/>
    <property type="project" value="GO_Central"/>
</dbReference>
<dbReference type="CDD" id="cd07422">
    <property type="entry name" value="MPP_ApaH"/>
    <property type="match status" value="1"/>
</dbReference>
<dbReference type="FunFam" id="3.60.21.10:FF:000013">
    <property type="entry name" value="Bis(5'-nucleosyl)-tetraphosphatase, symmetrical"/>
    <property type="match status" value="1"/>
</dbReference>
<dbReference type="Gene3D" id="3.60.21.10">
    <property type="match status" value="1"/>
</dbReference>
<dbReference type="HAMAP" id="MF_00199">
    <property type="entry name" value="ApaH"/>
    <property type="match status" value="1"/>
</dbReference>
<dbReference type="InterPro" id="IPR004617">
    <property type="entry name" value="ApaH"/>
</dbReference>
<dbReference type="InterPro" id="IPR004843">
    <property type="entry name" value="Calcineurin-like_PHP_ApaH"/>
</dbReference>
<dbReference type="InterPro" id="IPR029052">
    <property type="entry name" value="Metallo-depent_PP-like"/>
</dbReference>
<dbReference type="NCBIfam" id="TIGR00668">
    <property type="entry name" value="apaH"/>
    <property type="match status" value="1"/>
</dbReference>
<dbReference type="NCBIfam" id="NF001204">
    <property type="entry name" value="PRK00166.1"/>
    <property type="match status" value="1"/>
</dbReference>
<dbReference type="PANTHER" id="PTHR40942">
    <property type="match status" value="1"/>
</dbReference>
<dbReference type="PANTHER" id="PTHR40942:SF4">
    <property type="entry name" value="CYTOCHROME C5"/>
    <property type="match status" value="1"/>
</dbReference>
<dbReference type="Pfam" id="PF00149">
    <property type="entry name" value="Metallophos"/>
    <property type="match status" value="1"/>
</dbReference>
<dbReference type="PIRSF" id="PIRSF000903">
    <property type="entry name" value="B5n-ttraPtase_sm"/>
    <property type="match status" value="1"/>
</dbReference>
<dbReference type="SUPFAM" id="SSF56300">
    <property type="entry name" value="Metallo-dependent phosphatases"/>
    <property type="match status" value="1"/>
</dbReference>
<comment type="function">
    <text evidence="1">Hydrolyzes diadenosine 5',5'''-P1,P4-tetraphosphate to yield ADP.</text>
</comment>
<comment type="catalytic activity">
    <reaction evidence="1">
        <text>P(1),P(4)-bis(5'-adenosyl) tetraphosphate + H2O = 2 ADP + 2 H(+)</text>
        <dbReference type="Rhea" id="RHEA:24252"/>
        <dbReference type="ChEBI" id="CHEBI:15377"/>
        <dbReference type="ChEBI" id="CHEBI:15378"/>
        <dbReference type="ChEBI" id="CHEBI:58141"/>
        <dbReference type="ChEBI" id="CHEBI:456216"/>
        <dbReference type="EC" id="3.6.1.41"/>
    </reaction>
</comment>
<comment type="similarity">
    <text evidence="1">Belongs to the Ap4A hydrolase family.</text>
</comment>
<sequence length="289" mass="32341">MSTYLIGDIHGCLDELLALLAQVNFDPQQDTLWLTGDLVARGPASLDVLRYVRSLGPAVRMVLGNHDLHLLAVYAGISRNKPKDRITPLLDAPDADELINWLRRQPVLQVDDQLKLIMAHAGITPQWDIETAKMCAREVEAVLSSDSYPLFLDAMYGDMPNNWSPELTGLARLRFSTNALTRMRFCFPNGQLDMICKDTPENAPAPLKPWFDLPRLVDPEYSIIFGHWASLEGKGVPEGIYGLDTGCCWGGDLTLLRWDDKRYFTQRAFKAEAEINNNNGFAAGEAVQH</sequence>
<gene>
    <name evidence="1" type="primary">apaH</name>
    <name type="ordered locus">YPO0490</name>
    <name type="ordered locus">y3685</name>
    <name type="ordered locus">YP_3689</name>
</gene>
<proteinExistence type="inferred from homology"/>
<protein>
    <recommendedName>
        <fullName evidence="1">Bis(5'-nucleosyl)-tetraphosphatase, symmetrical</fullName>
        <ecNumber evidence="1">3.6.1.41</ecNumber>
    </recommendedName>
    <alternativeName>
        <fullName evidence="1">Ap4A hydrolase</fullName>
    </alternativeName>
    <alternativeName>
        <fullName evidence="1">Diadenosine 5',5'''-P1,P4-tetraphosphate pyrophosphohydrolase</fullName>
    </alternativeName>
    <alternativeName>
        <fullName evidence="1">Diadenosine tetraphosphatase</fullName>
    </alternativeName>
</protein>
<evidence type="ECO:0000255" key="1">
    <source>
        <dbReference type="HAMAP-Rule" id="MF_00199"/>
    </source>
</evidence>